<geneLocation type="chloroplast"/>
<keyword id="KW-0150">Chloroplast</keyword>
<keyword id="KW-0507">mRNA processing</keyword>
<keyword id="KW-0934">Plastid</keyword>
<keyword id="KW-0694">RNA-binding</keyword>
<keyword id="KW-0819">tRNA processing</keyword>
<evidence type="ECO:0000255" key="1">
    <source>
        <dbReference type="HAMAP-Rule" id="MF_01390"/>
    </source>
</evidence>
<organism>
    <name type="scientific">Phyllodoce caerulea</name>
    <name type="common">Blue mountain heath</name>
    <name type="synonym">Andromeda caerulea</name>
    <dbReference type="NCBI Taxonomy" id="49155"/>
    <lineage>
        <taxon>Eukaryota</taxon>
        <taxon>Viridiplantae</taxon>
        <taxon>Streptophyta</taxon>
        <taxon>Embryophyta</taxon>
        <taxon>Tracheophyta</taxon>
        <taxon>Spermatophyta</taxon>
        <taxon>Magnoliopsida</taxon>
        <taxon>eudicotyledons</taxon>
        <taxon>Gunneridae</taxon>
        <taxon>Pentapetalae</taxon>
        <taxon>asterids</taxon>
        <taxon>Ericales</taxon>
        <taxon>Ericaceae</taxon>
        <taxon>Ericoideae</taxon>
        <taxon>Phyllodoceae</taxon>
        <taxon>Phyllodoce</taxon>
    </lineage>
</organism>
<gene>
    <name evidence="1" type="primary">matK</name>
</gene>
<sequence>MAEFKRYLELDISQQHDFIYPLLFQEYIYALAHDHGLNRSIFLENAGYDNKSSLLIGKRLITHLITQMDQQKKFLVPDSDSNQKKNLGYNTNLYSQMIFEGFAVVMEIPFYLRLLSFLEGKERVKSHNXXXXXXXXXXXXXXXXXXXXXXDIQIPHPIHLEILVQTLRYWVKDASSLHLLRFFLHEYPIWNSLITQKKSIFSFSKKNQRFFLFLYNFHVCEYESIFVFLRQPTSHLRSISSETFLERISFYRKIELEVFTKDFKSILWLFKEPFLHYVRYRGKAILASKGTSLLMNKWKYYLLNFWQSYFYMWSQPRRIHINQLSNHFLDFLGYLSSVRLKPLMLRSQMIENSFLIENASKKFDTLMPITPMILSLYKAKFCNVLGHPMSKPAWSGLSDSDIIERFGRIYRNLSHYYSGSLKKMSLYRIKYILRLSCARTLARKRKSTVRAFLKRLGVGLLAEFFTEEEQVFYLTFQKVSFTSGELYRRRIWYLDIICINDLANYE</sequence>
<dbReference type="EMBL" id="U61318">
    <property type="protein sequence ID" value="AAB93739.1"/>
    <property type="molecule type" value="Genomic_DNA"/>
</dbReference>
<dbReference type="GO" id="GO:0009507">
    <property type="term" value="C:chloroplast"/>
    <property type="evidence" value="ECO:0007669"/>
    <property type="project" value="UniProtKB-SubCell"/>
</dbReference>
<dbReference type="GO" id="GO:0003723">
    <property type="term" value="F:RNA binding"/>
    <property type="evidence" value="ECO:0007669"/>
    <property type="project" value="UniProtKB-KW"/>
</dbReference>
<dbReference type="GO" id="GO:0006397">
    <property type="term" value="P:mRNA processing"/>
    <property type="evidence" value="ECO:0007669"/>
    <property type="project" value="UniProtKB-KW"/>
</dbReference>
<dbReference type="GO" id="GO:0008380">
    <property type="term" value="P:RNA splicing"/>
    <property type="evidence" value="ECO:0007669"/>
    <property type="project" value="UniProtKB-UniRule"/>
</dbReference>
<dbReference type="GO" id="GO:0008033">
    <property type="term" value="P:tRNA processing"/>
    <property type="evidence" value="ECO:0007669"/>
    <property type="project" value="UniProtKB-KW"/>
</dbReference>
<dbReference type="HAMAP" id="MF_01390">
    <property type="entry name" value="MatK"/>
    <property type="match status" value="1"/>
</dbReference>
<dbReference type="InterPro" id="IPR024937">
    <property type="entry name" value="Domain_X"/>
</dbReference>
<dbReference type="InterPro" id="IPR002866">
    <property type="entry name" value="Maturase_MatK"/>
</dbReference>
<dbReference type="InterPro" id="IPR024942">
    <property type="entry name" value="Maturase_MatK_N"/>
</dbReference>
<dbReference type="PANTHER" id="PTHR34811">
    <property type="entry name" value="MATURASE K"/>
    <property type="match status" value="1"/>
</dbReference>
<dbReference type="PANTHER" id="PTHR34811:SF1">
    <property type="entry name" value="MATURASE K"/>
    <property type="match status" value="1"/>
</dbReference>
<dbReference type="Pfam" id="PF01348">
    <property type="entry name" value="Intron_maturas2"/>
    <property type="match status" value="1"/>
</dbReference>
<dbReference type="Pfam" id="PF01824">
    <property type="entry name" value="MatK_N"/>
    <property type="match status" value="1"/>
</dbReference>
<protein>
    <recommendedName>
        <fullName evidence="1">Maturase K</fullName>
    </recommendedName>
    <alternativeName>
        <fullName evidence="1">Intron maturase</fullName>
    </alternativeName>
</protein>
<comment type="function">
    <text evidence="1">Usually encoded in the trnK tRNA gene intron. Probably assists in splicing its own and other chloroplast group II introns.</text>
</comment>
<comment type="subcellular location">
    <subcellularLocation>
        <location>Plastid</location>
        <location>Chloroplast</location>
    </subcellularLocation>
</comment>
<comment type="similarity">
    <text evidence="1">Belongs to the intron maturase 2 family. MatK subfamily.</text>
</comment>
<reference key="1">
    <citation type="journal article" date="1997" name="Am. J. Bot.">
        <title>Phylogenetics relationships of Rhododendroideae (Ericaceae).</title>
        <authorList>
            <person name="Kron K.A."/>
        </authorList>
    </citation>
    <scope>NUCLEOTIDE SEQUENCE [GENOMIC DNA]</scope>
</reference>
<feature type="chain" id="PRO_0000143591" description="Maturase K">
    <location>
        <begin position="1"/>
        <end position="506"/>
    </location>
</feature>
<proteinExistence type="inferred from homology"/>
<accession>O47135</accession>
<name>MATK_PHYCU</name>